<name>DBP6_CANAL</name>
<sequence>MFSQRYDPLAEENNGSRPADSGFGVSLKKRKLSDDESSDEEEEEEETDESEHESSQDEDINEEEPEEEDEDTNKVDDNMEIDSQPEVDPDYIHKHQAIFNKFKQSTESETIEQDKEEDGEEDANIEQHSLVPLPQPALPRDRKLSSVSTHTKNLDWLTKPQYASPSDKKAFTDFKSSSFMIKNLEKMGFTEAFSVQISVLNMMLPEIEAQKLKPDRVGDILVNASTGSGKTLAYSIPIIESLYRRVVPRVRVIILVPTKPLINQVKSTLLQLSSGTNLQIAALKNDVSINDEKDSLTKSVPDIIVSTPGRLVEHLLNDSINLSSLQYLIIDEADRLLNQSFQNWSNVLLDKIDSQINIAEVWKLSVQKLVFSATLTTDAGKLSSLKFYNPRLIIVNDSKQLVNEIFTVPVTLSEFKIHLGVAKNSLKPLILTKFLISTNKLSNVLIFTKSNESSIRLTELLTSLFQKLSINLKIAFINSTNNRTSIRSKILKQFSNQEVNILITTDLIARGIDVASITDVINYDLPNSSREYVHRVGRTARANQVGYAYSFCFGKGENSWFKKLAHEVSRSKEVENVDLNVKELISDRDEEIYQQALHELQQQAKK</sequence>
<protein>
    <recommendedName>
        <fullName>ATP-dependent RNA helicase DBP6</fullName>
        <ecNumber>3.6.4.13</ecNumber>
    </recommendedName>
</protein>
<evidence type="ECO:0000250" key="1"/>
<evidence type="ECO:0000255" key="2">
    <source>
        <dbReference type="PROSITE-ProRule" id="PRU00541"/>
    </source>
</evidence>
<evidence type="ECO:0000255" key="3">
    <source>
        <dbReference type="PROSITE-ProRule" id="PRU00542"/>
    </source>
</evidence>
<evidence type="ECO:0000256" key="4">
    <source>
        <dbReference type="SAM" id="MobiDB-lite"/>
    </source>
</evidence>
<evidence type="ECO:0000305" key="5"/>
<dbReference type="EC" id="3.6.4.13"/>
<dbReference type="EMBL" id="CP017630">
    <property type="protein sequence ID" value="AOW31466.1"/>
    <property type="molecule type" value="Genomic_DNA"/>
</dbReference>
<dbReference type="RefSeq" id="XP_711043.2">
    <property type="nucleotide sequence ID" value="XM_705951.2"/>
</dbReference>
<dbReference type="SMR" id="Q59MW2"/>
<dbReference type="FunCoup" id="Q59MW2">
    <property type="interactions" value="912"/>
</dbReference>
<dbReference type="STRING" id="237561.Q59MW2"/>
<dbReference type="EnsemblFungi" id="CR_07750C_A-T">
    <property type="protein sequence ID" value="CR_07750C_A-T-p1"/>
    <property type="gene ID" value="CR_07750C_A"/>
</dbReference>
<dbReference type="GeneID" id="3647350"/>
<dbReference type="KEGG" id="cal:CAALFM_CR07750CA"/>
<dbReference type="CGD" id="CAL0000190599">
    <property type="gene designation" value="DBP6"/>
</dbReference>
<dbReference type="VEuPathDB" id="FungiDB:CR_07750C_A"/>
<dbReference type="eggNOG" id="KOG0350">
    <property type="taxonomic scope" value="Eukaryota"/>
</dbReference>
<dbReference type="HOGENOM" id="CLU_003041_15_2_1"/>
<dbReference type="InParanoid" id="Q59MW2"/>
<dbReference type="OrthoDB" id="3370at2759"/>
<dbReference type="PRO" id="PR:Q59MW2"/>
<dbReference type="Proteomes" id="UP000000559">
    <property type="component" value="Chromosome R"/>
</dbReference>
<dbReference type="GO" id="GO:0005730">
    <property type="term" value="C:nucleolus"/>
    <property type="evidence" value="ECO:0007669"/>
    <property type="project" value="UniProtKB-SubCell"/>
</dbReference>
<dbReference type="GO" id="GO:0005634">
    <property type="term" value="C:nucleus"/>
    <property type="evidence" value="ECO:0000318"/>
    <property type="project" value="GO_Central"/>
</dbReference>
<dbReference type="GO" id="GO:0030687">
    <property type="term" value="C:preribosome, large subunit precursor"/>
    <property type="evidence" value="ECO:0007669"/>
    <property type="project" value="EnsemblFungi"/>
</dbReference>
<dbReference type="GO" id="GO:0005524">
    <property type="term" value="F:ATP binding"/>
    <property type="evidence" value="ECO:0007669"/>
    <property type="project" value="UniProtKB-KW"/>
</dbReference>
<dbReference type="GO" id="GO:0016887">
    <property type="term" value="F:ATP hydrolysis activity"/>
    <property type="evidence" value="ECO:0007669"/>
    <property type="project" value="RHEA"/>
</dbReference>
<dbReference type="GO" id="GO:0003723">
    <property type="term" value="F:RNA binding"/>
    <property type="evidence" value="ECO:0007669"/>
    <property type="project" value="UniProtKB-KW"/>
</dbReference>
<dbReference type="GO" id="GO:0003724">
    <property type="term" value="F:RNA helicase activity"/>
    <property type="evidence" value="ECO:0007669"/>
    <property type="project" value="UniProtKB-EC"/>
</dbReference>
<dbReference type="GO" id="GO:0000466">
    <property type="term" value="P:maturation of 5.8S rRNA from tricistronic rRNA transcript (SSU-rRNA, 5.8S rRNA, LSU-rRNA)"/>
    <property type="evidence" value="ECO:0007669"/>
    <property type="project" value="EnsemblFungi"/>
</dbReference>
<dbReference type="GO" id="GO:0000463">
    <property type="term" value="P:maturation of LSU-rRNA from tricistronic rRNA transcript (SSU-rRNA, 5.8S rRNA, LSU-rRNA)"/>
    <property type="evidence" value="ECO:0007669"/>
    <property type="project" value="EnsemblFungi"/>
</dbReference>
<dbReference type="CDD" id="cd17956">
    <property type="entry name" value="DEADc_DDX51"/>
    <property type="match status" value="1"/>
</dbReference>
<dbReference type="CDD" id="cd18787">
    <property type="entry name" value="SF2_C_DEAD"/>
    <property type="match status" value="1"/>
</dbReference>
<dbReference type="Gene3D" id="3.40.50.300">
    <property type="entry name" value="P-loop containing nucleotide triphosphate hydrolases"/>
    <property type="match status" value="2"/>
</dbReference>
<dbReference type="InterPro" id="IPR011545">
    <property type="entry name" value="DEAD/DEAH_box_helicase_dom"/>
</dbReference>
<dbReference type="InterPro" id="IPR050079">
    <property type="entry name" value="DEAD_box_RNA_helicase"/>
</dbReference>
<dbReference type="InterPro" id="IPR014001">
    <property type="entry name" value="Helicase_ATP-bd"/>
</dbReference>
<dbReference type="InterPro" id="IPR001650">
    <property type="entry name" value="Helicase_C-like"/>
</dbReference>
<dbReference type="InterPro" id="IPR027417">
    <property type="entry name" value="P-loop_NTPase"/>
</dbReference>
<dbReference type="InterPro" id="IPR000629">
    <property type="entry name" value="RNA-helicase_DEAD-box_CS"/>
</dbReference>
<dbReference type="PANTHER" id="PTHR47959:SF1">
    <property type="entry name" value="ATP-DEPENDENT RNA HELICASE DBPA"/>
    <property type="match status" value="1"/>
</dbReference>
<dbReference type="PANTHER" id="PTHR47959">
    <property type="entry name" value="ATP-DEPENDENT RNA HELICASE RHLE-RELATED"/>
    <property type="match status" value="1"/>
</dbReference>
<dbReference type="Pfam" id="PF00270">
    <property type="entry name" value="DEAD"/>
    <property type="match status" value="1"/>
</dbReference>
<dbReference type="Pfam" id="PF00271">
    <property type="entry name" value="Helicase_C"/>
    <property type="match status" value="1"/>
</dbReference>
<dbReference type="SMART" id="SM00487">
    <property type="entry name" value="DEXDc"/>
    <property type="match status" value="1"/>
</dbReference>
<dbReference type="SMART" id="SM00490">
    <property type="entry name" value="HELICc"/>
    <property type="match status" value="1"/>
</dbReference>
<dbReference type="SUPFAM" id="SSF52540">
    <property type="entry name" value="P-loop containing nucleoside triphosphate hydrolases"/>
    <property type="match status" value="2"/>
</dbReference>
<dbReference type="PROSITE" id="PS00039">
    <property type="entry name" value="DEAD_ATP_HELICASE"/>
    <property type="match status" value="1"/>
</dbReference>
<dbReference type="PROSITE" id="PS51192">
    <property type="entry name" value="HELICASE_ATP_BIND_1"/>
    <property type="match status" value="1"/>
</dbReference>
<dbReference type="PROSITE" id="PS51194">
    <property type="entry name" value="HELICASE_CTER"/>
    <property type="match status" value="1"/>
</dbReference>
<dbReference type="PROSITE" id="PS51195">
    <property type="entry name" value="Q_MOTIF"/>
    <property type="match status" value="1"/>
</dbReference>
<proteinExistence type="inferred from homology"/>
<organism>
    <name type="scientific">Candida albicans (strain SC5314 / ATCC MYA-2876)</name>
    <name type="common">Yeast</name>
    <dbReference type="NCBI Taxonomy" id="237561"/>
    <lineage>
        <taxon>Eukaryota</taxon>
        <taxon>Fungi</taxon>
        <taxon>Dikarya</taxon>
        <taxon>Ascomycota</taxon>
        <taxon>Saccharomycotina</taxon>
        <taxon>Pichiomycetes</taxon>
        <taxon>Debaryomycetaceae</taxon>
        <taxon>Candida/Lodderomyces clade</taxon>
        <taxon>Candida</taxon>
    </lineage>
</organism>
<gene>
    <name type="primary">DBP6</name>
    <name type="ordered locus">CAALFM_CR07750CA</name>
    <name type="ORF">CaO19.11188</name>
    <name type="ORF">CaO19.3704</name>
</gene>
<keyword id="KW-0067">ATP-binding</keyword>
<keyword id="KW-0347">Helicase</keyword>
<keyword id="KW-0378">Hydrolase</keyword>
<keyword id="KW-0547">Nucleotide-binding</keyword>
<keyword id="KW-0539">Nucleus</keyword>
<keyword id="KW-1185">Reference proteome</keyword>
<keyword id="KW-0690">Ribosome biogenesis</keyword>
<keyword id="KW-0694">RNA-binding</keyword>
<keyword id="KW-0698">rRNA processing</keyword>
<reference key="1">
    <citation type="journal article" date="2004" name="Proc. Natl. Acad. Sci. U.S.A.">
        <title>The diploid genome sequence of Candida albicans.</title>
        <authorList>
            <person name="Jones T."/>
            <person name="Federspiel N.A."/>
            <person name="Chibana H."/>
            <person name="Dungan J."/>
            <person name="Kalman S."/>
            <person name="Magee B.B."/>
            <person name="Newport G."/>
            <person name="Thorstenson Y.R."/>
            <person name="Agabian N."/>
            <person name="Magee P.T."/>
            <person name="Davis R.W."/>
            <person name="Scherer S."/>
        </authorList>
    </citation>
    <scope>NUCLEOTIDE SEQUENCE [LARGE SCALE GENOMIC DNA]</scope>
    <source>
        <strain>SC5314 / ATCC MYA-2876</strain>
    </source>
</reference>
<reference key="2">
    <citation type="journal article" date="2007" name="Genome Biol.">
        <title>Assembly of the Candida albicans genome into sixteen supercontigs aligned on the eight chromosomes.</title>
        <authorList>
            <person name="van het Hoog M."/>
            <person name="Rast T.J."/>
            <person name="Martchenko M."/>
            <person name="Grindle S."/>
            <person name="Dignard D."/>
            <person name="Hogues H."/>
            <person name="Cuomo C."/>
            <person name="Berriman M."/>
            <person name="Scherer S."/>
            <person name="Magee B.B."/>
            <person name="Whiteway M."/>
            <person name="Chibana H."/>
            <person name="Nantel A."/>
            <person name="Magee P.T."/>
        </authorList>
    </citation>
    <scope>GENOME REANNOTATION</scope>
    <source>
        <strain>SC5314 / ATCC MYA-2876</strain>
    </source>
</reference>
<reference key="3">
    <citation type="journal article" date="2013" name="Genome Biol.">
        <title>Assembly of a phased diploid Candida albicans genome facilitates allele-specific measurements and provides a simple model for repeat and indel structure.</title>
        <authorList>
            <person name="Muzzey D."/>
            <person name="Schwartz K."/>
            <person name="Weissman J.S."/>
            <person name="Sherlock G."/>
        </authorList>
    </citation>
    <scope>NUCLEOTIDE SEQUENCE [LARGE SCALE GENOMIC DNA]</scope>
    <scope>GENOME REANNOTATION</scope>
    <source>
        <strain>SC5314 / ATCC MYA-2876</strain>
    </source>
</reference>
<feature type="chain" id="PRO_0000294659" description="ATP-dependent RNA helicase DBP6">
    <location>
        <begin position="1"/>
        <end position="606"/>
    </location>
</feature>
<feature type="domain" description="Helicase ATP-binding" evidence="2">
    <location>
        <begin position="211"/>
        <end position="393"/>
    </location>
</feature>
<feature type="domain" description="Helicase C-terminal" evidence="3">
    <location>
        <begin position="430"/>
        <end position="585"/>
    </location>
</feature>
<feature type="region of interest" description="Disordered" evidence="4">
    <location>
        <begin position="1"/>
        <end position="88"/>
    </location>
</feature>
<feature type="region of interest" description="Disordered" evidence="4">
    <location>
        <begin position="101"/>
        <end position="124"/>
    </location>
</feature>
<feature type="short sequence motif" description="Q motif">
    <location>
        <begin position="169"/>
        <end position="197"/>
    </location>
</feature>
<feature type="short sequence motif" description="DEAD box">
    <location>
        <begin position="331"/>
        <end position="334"/>
    </location>
</feature>
<feature type="compositionally biased region" description="Acidic residues" evidence="4">
    <location>
        <begin position="35"/>
        <end position="71"/>
    </location>
</feature>
<feature type="compositionally biased region" description="Acidic residues" evidence="4">
    <location>
        <begin position="78"/>
        <end position="88"/>
    </location>
</feature>
<feature type="compositionally biased region" description="Acidic residues" evidence="4">
    <location>
        <begin position="109"/>
        <end position="124"/>
    </location>
</feature>
<feature type="binding site" evidence="2">
    <location>
        <begin position="224"/>
        <end position="231"/>
    </location>
    <ligand>
        <name>ATP</name>
        <dbReference type="ChEBI" id="CHEBI:30616"/>
    </ligand>
</feature>
<comment type="function">
    <text evidence="1">ATP-binding RNA helicase involved in the biogenesis of 60S ribosomal subunits and is required for the normal formation of 25S and 5.8S rRNAs.</text>
</comment>
<comment type="catalytic activity">
    <reaction>
        <text>ATP + H2O = ADP + phosphate + H(+)</text>
        <dbReference type="Rhea" id="RHEA:13065"/>
        <dbReference type="ChEBI" id="CHEBI:15377"/>
        <dbReference type="ChEBI" id="CHEBI:15378"/>
        <dbReference type="ChEBI" id="CHEBI:30616"/>
        <dbReference type="ChEBI" id="CHEBI:43474"/>
        <dbReference type="ChEBI" id="CHEBI:456216"/>
        <dbReference type="EC" id="3.6.4.13"/>
    </reaction>
</comment>
<comment type="subunit">
    <text evidence="1">Associated with pre-ribosomal particles.</text>
</comment>
<comment type="subcellular location">
    <subcellularLocation>
        <location evidence="1">Nucleus</location>
        <location evidence="1">Nucleolus</location>
    </subcellularLocation>
</comment>
<comment type="domain">
    <text>The Q motif is unique to and characteristic of the DEAD box family of RNA helicases and controls ATP binding and hydrolysis.</text>
</comment>
<comment type="similarity">
    <text evidence="5">Belongs to the DEAD box helicase family. DDX51/DBP6 subfamily.</text>
</comment>
<accession>Q59MW2</accession>
<accession>A0A1D8PTJ8</accession>